<evidence type="ECO:0000250" key="1"/>
<evidence type="ECO:0000255" key="2"/>
<evidence type="ECO:0000255" key="3">
    <source>
        <dbReference type="PROSITE-ProRule" id="PRU01364"/>
    </source>
</evidence>
<evidence type="ECO:0000269" key="4">
    <source>
    </source>
</evidence>
<evidence type="ECO:0000305" key="5"/>
<name>REP9_FBNC9</name>
<gene>
    <name type="primary">C9</name>
</gene>
<dbReference type="EC" id="2.7.7.-"/>
<dbReference type="EC" id="3.1.21.-"/>
<dbReference type="EC" id="3.6.1.-"/>
<dbReference type="EMBL" id="AJ005966">
    <property type="protein sequence ID" value="CAA06789.1"/>
    <property type="molecule type" value="Genomic_DNA"/>
</dbReference>
<dbReference type="EMBL" id="AJ132187">
    <property type="protein sequence ID" value="CAB44027.1"/>
    <property type="molecule type" value="Genomic_DNA"/>
</dbReference>
<dbReference type="SMR" id="P0CK60"/>
<dbReference type="KEGG" id="vg:993380"/>
<dbReference type="Proteomes" id="UP001515420">
    <property type="component" value="Segment"/>
</dbReference>
<dbReference type="Proteomes" id="UP001516720">
    <property type="component" value="Segment"/>
</dbReference>
<dbReference type="GO" id="GO:0042025">
    <property type="term" value="C:host cell nucleus"/>
    <property type="evidence" value="ECO:0007669"/>
    <property type="project" value="UniProtKB-SubCell"/>
</dbReference>
<dbReference type="GO" id="GO:0005524">
    <property type="term" value="F:ATP binding"/>
    <property type="evidence" value="ECO:0007669"/>
    <property type="project" value="UniProtKB-KW"/>
</dbReference>
<dbReference type="GO" id="GO:0016887">
    <property type="term" value="F:ATP hydrolysis activity"/>
    <property type="evidence" value="ECO:0007669"/>
    <property type="project" value="RHEA"/>
</dbReference>
<dbReference type="GO" id="GO:0003677">
    <property type="term" value="F:DNA binding"/>
    <property type="evidence" value="ECO:0007669"/>
    <property type="project" value="UniProtKB-KW"/>
</dbReference>
<dbReference type="GO" id="GO:0004519">
    <property type="term" value="F:endonuclease activity"/>
    <property type="evidence" value="ECO:0007669"/>
    <property type="project" value="UniProtKB-KW"/>
</dbReference>
<dbReference type="GO" id="GO:0046872">
    <property type="term" value="F:metal ion binding"/>
    <property type="evidence" value="ECO:0007669"/>
    <property type="project" value="UniProtKB-KW"/>
</dbReference>
<dbReference type="GO" id="GO:0016779">
    <property type="term" value="F:nucleotidyltransferase activity"/>
    <property type="evidence" value="ECO:0007669"/>
    <property type="project" value="UniProtKB-KW"/>
</dbReference>
<dbReference type="GO" id="GO:0003723">
    <property type="term" value="F:RNA binding"/>
    <property type="evidence" value="ECO:0007669"/>
    <property type="project" value="InterPro"/>
</dbReference>
<dbReference type="GO" id="GO:0003724">
    <property type="term" value="F:RNA helicase activity"/>
    <property type="evidence" value="ECO:0007669"/>
    <property type="project" value="InterPro"/>
</dbReference>
<dbReference type="GO" id="GO:0006260">
    <property type="term" value="P:DNA replication"/>
    <property type="evidence" value="ECO:0007669"/>
    <property type="project" value="UniProtKB-KW"/>
</dbReference>
<dbReference type="Gene3D" id="3.40.1310.20">
    <property type="match status" value="1"/>
</dbReference>
<dbReference type="InterPro" id="IPR049912">
    <property type="entry name" value="CRESS_DNA_REP"/>
</dbReference>
<dbReference type="InterPro" id="IPR000605">
    <property type="entry name" value="Helicase_SF3_ssDNA/RNA_vir"/>
</dbReference>
<dbReference type="Pfam" id="PF00910">
    <property type="entry name" value="RNA_helicase"/>
    <property type="match status" value="1"/>
</dbReference>
<dbReference type="Pfam" id="PF02407">
    <property type="entry name" value="Viral_Rep"/>
    <property type="match status" value="1"/>
</dbReference>
<dbReference type="PROSITE" id="PS52020">
    <property type="entry name" value="CRESS_DNA_REP"/>
    <property type="match status" value="1"/>
</dbReference>
<organism>
    <name type="scientific">Faba bean necrotic yellows C9 alphasatellite</name>
    <name type="common">FBNYC9A</name>
    <dbReference type="NCBI Taxonomy" id="1453083"/>
    <lineage>
        <taxon>Viruses</taxon>
        <taxon>Viruses incertae sedis</taxon>
        <taxon>Alphasatellitidae</taxon>
        <taxon>Nanoalphasatellitinae</taxon>
        <taxon>Fabenesatellite</taxon>
        <taxon>Faba bean necrotic yellows alphasatellite 2</taxon>
    </lineage>
</organism>
<sequence>MSAVNWVFTLNFAGEVPVLSFDERVQYAVWQHERVNHDHIQGVIQLKKKAKMNTVKNIIGGNPHLEKMKGSIEEASAYAQKEESRVAGPWSYGELLKKGSHKRKIMELIKDPENELEEPQKYRRAMAWSAMDESRKLAEEGGFPYTLYSWQETVLGLLEEEPNDRIIIWVYGPNGNEGKSQFGKFLGLKKDYLYLPGGKTQDMTYMLMKNPKANVVMDIPRCNSEYLNYQFMELIKNRTIFSYKYEPVGCIINNKIHVIVLANVLPDYEKISQDRIKIIYC</sequence>
<accession>P0CK60</accession>
<accession>O91252</accession>
<accession>P0CAX6</accession>
<accession>P0CK61</accession>
<accession>Q9WIK2</accession>
<keyword id="KW-0067">ATP-binding</keyword>
<keyword id="KW-0190">Covalent protein-DNA linkage</keyword>
<keyword id="KW-0235">DNA replication</keyword>
<keyword id="KW-0238">DNA-binding</keyword>
<keyword id="KW-0255">Endonuclease</keyword>
<keyword id="KW-0347">Helicase</keyword>
<keyword id="KW-1048">Host nucleus</keyword>
<keyword id="KW-0378">Hydrolase</keyword>
<keyword id="KW-0479">Metal-binding</keyword>
<keyword id="KW-0511">Multifunctional enzyme</keyword>
<keyword id="KW-0540">Nuclease</keyword>
<keyword id="KW-0547">Nucleotide-binding</keyword>
<keyword id="KW-0548">Nucleotidyltransferase</keyword>
<keyword id="KW-1185">Reference proteome</keyword>
<keyword id="KW-0808">Transferase</keyword>
<reference key="1">
    <citation type="journal article" date="1998" name="J. Gen. Virol.">
        <title>Ten distinct circular ssDNA components, four of which encode putative replication-associated proteins, are associated with the faba bean necrotic yellows virus genome.</title>
        <authorList>
            <person name="Katul L."/>
            <person name="Timchenko T."/>
            <person name="Gronenborn B."/>
            <person name="Vetten H.J."/>
        </authorList>
    </citation>
    <scope>NUCLEOTIDE SEQUENCE [GENOMIC DNA]</scope>
</reference>
<reference key="2">
    <citation type="journal article" date="1999" name="J. Virol.">
        <title>A single Rep protein initiates replication of multiple genome components of faba bean necrotic yellows virus, a single-stranded DNA virus of plants.</title>
        <authorList>
            <person name="Timchenko T."/>
            <person name="de Kouchkovsky F."/>
            <person name="Katul L."/>
            <person name="David C."/>
            <person name="Vetten H.J."/>
            <person name="Gronenborn B."/>
        </authorList>
    </citation>
    <scope>NUCLEOTIDE SEQUENCE [GENOMIC DNA]</scope>
    <scope>FUNCTION</scope>
</reference>
<reference key="3">
    <citation type="journal article" date="2004" name="Vet. Microbiol.">
        <title>Nanoviruses: genome organisation and protein function.</title>
        <authorList>
            <person name="Gronenborn B."/>
        </authorList>
    </citation>
    <scope>REVIEW</scope>
</reference>
<proteinExistence type="inferred from homology"/>
<protein>
    <recommendedName>
        <fullName>Para-Rep C9</fullName>
        <shortName>Rep9</shortName>
        <ecNumber>2.7.7.-</ecNumber>
        <ecNumber>3.1.21.-</ecNumber>
        <ecNumber>3.6.1.-</ecNumber>
    </recommendedName>
    <alternativeName>
        <fullName>ATP-dependent helicase C9</fullName>
    </alternativeName>
    <alternativeName>
        <fullName>Replication-associated protein of non-essential DNA C9</fullName>
    </alternativeName>
</protein>
<feature type="chain" id="PRO_0000222442" description="Para-Rep C9">
    <location>
        <begin position="1"/>
        <end position="281"/>
    </location>
</feature>
<feature type="domain" description="CRESS-DNA virus Rep endonuclease" evidence="3">
    <location>
        <begin position="1"/>
        <end position="95"/>
    </location>
</feature>
<feature type="short sequence motif" description="RCR-1" evidence="3">
    <location>
        <begin position="7"/>
        <end position="10"/>
    </location>
</feature>
<feature type="short sequence motif" description="RCR-2" evidence="3">
    <location>
        <begin position="39"/>
        <end position="41"/>
    </location>
</feature>
<feature type="short sequence motif" description="Nuclear localization signal" evidence="2">
    <location>
        <begin position="48"/>
        <end position="69"/>
    </location>
</feature>
<feature type="short sequence motif" description="RCR-3" evidence="3">
    <location>
        <begin position="78"/>
        <end position="81"/>
    </location>
</feature>
<feature type="short sequence motif" description="Nuclear localization signal" evidence="2">
    <location>
        <begin position="95"/>
        <end position="101"/>
    </location>
</feature>
<feature type="active site" description="For DNA cleavage activity" evidence="3">
    <location>
        <position position="78"/>
    </location>
</feature>
<feature type="binding site" evidence="2">
    <location>
        <position position="33"/>
    </location>
    <ligand>
        <name>a divalent metal cation</name>
        <dbReference type="ChEBI" id="CHEBI:60240"/>
    </ligand>
</feature>
<feature type="binding site" evidence="2">
    <location>
        <position position="39"/>
    </location>
    <ligand>
        <name>a divalent metal cation</name>
        <dbReference type="ChEBI" id="CHEBI:60240"/>
    </ligand>
</feature>
<feature type="binding site" evidence="2">
    <location>
        <position position="83"/>
    </location>
    <ligand>
        <name>a divalent metal cation</name>
        <dbReference type="ChEBI" id="CHEBI:60240"/>
    </ligand>
</feature>
<feature type="binding site" evidence="1">
    <location>
        <begin position="178"/>
        <end position="180"/>
    </location>
    <ligand>
        <name>ATP</name>
        <dbReference type="ChEBI" id="CHEBI:30616"/>
    </ligand>
</feature>
<feature type="sequence variant" evidence="5">
    <original>G</original>
    <variation>E</variation>
    <location>
        <position position="141"/>
    </location>
</feature>
<feature type="sequence variant" evidence="5">
    <original>TL</original>
    <variation>MF</variation>
    <location>
        <begin position="146"/>
        <end position="147"/>
    </location>
</feature>
<feature type="sequence variant" evidence="5">
    <original>I</original>
    <variation>T</variation>
    <location>
        <position position="166"/>
    </location>
</feature>
<feature type="sequence variant" evidence="5">
    <original>F</original>
    <variation>Y</variation>
    <location>
        <position position="241"/>
    </location>
</feature>
<comment type="function">
    <text evidence="1 4">Initiates and terminates the replication only of its own subviral DNA molecule. The closed circular ssDNA genome is first converted to a superhelical dsDNA. Rep binds a specific hairpin at the genome origin of replication. Introduces an endonucleolytic nick within the intergenic region of the genome, thereby initiating the rolling circle replication (RCR). Following cleavage, binds covalently to the 5'-phosphate of DNA as a tyrosyl ester. The cleavage gives rise to a free 3'-OH that serves as a primer for the cellular DNA polymerase. The polymerase synthesizes the (+) strand DNA by rolling circle mechanism. After one round of replication, a Rep-catalyzed nucleotidyl transfer reaction releases a circular single-stranded virus genome, thereby terminating the replication. Displays origin-specific DNA cleavage, nucleotidyl transferase, ATPase and helicase activities (By similarity).</text>
</comment>
<comment type="catalytic activity">
    <reaction>
        <text>ATP + H2O = ADP + phosphate + H(+)</text>
        <dbReference type="Rhea" id="RHEA:13065"/>
        <dbReference type="ChEBI" id="CHEBI:15377"/>
        <dbReference type="ChEBI" id="CHEBI:15378"/>
        <dbReference type="ChEBI" id="CHEBI:30616"/>
        <dbReference type="ChEBI" id="CHEBI:43474"/>
        <dbReference type="ChEBI" id="CHEBI:456216"/>
    </reaction>
</comment>
<comment type="cofactor">
    <cofactor evidence="1">
        <name>Mg(2+)</name>
        <dbReference type="ChEBI" id="CHEBI:18420"/>
    </cofactor>
    <cofactor evidence="1">
        <name>Mn(2+)</name>
        <dbReference type="ChEBI" id="CHEBI:29035"/>
    </cofactor>
    <text evidence="1">Divalent metal cations, possibly Mg(2+) or Mn(2+).</text>
</comment>
<comment type="subunit">
    <text evidence="1 5">Homooligomer (Potential). Rep binds to repeated DNA motifs (iterons) (By similarity).</text>
</comment>
<comment type="subcellular location">
    <subcellularLocation>
        <location evidence="5">Host nucleus</location>
    </subcellularLocation>
</comment>
<comment type="domain">
    <text>There are 3 rolling circle replication (RCR) motifs. RCR-2 is probably involved in metal coordination. RCR-3 is required for phosphodiester bond cleavage for initiation of RCR.</text>
</comment>
<comment type="miscellaneous">
    <text>The genome of nanoviruses is composed of six to eight segments. In addition, some isolates contain subviral DNAs.</text>
</comment>
<comment type="similarity">
    <text evidence="5">Belongs to the nanoviridea/circoviridae replication-associated protein family.</text>
</comment>
<comment type="caution">
    <text evidence="5">This protein is encoded by a subviral DNA that is not present in all isolates of the virus.</text>
</comment>